<sequence>MEYNKKLYEAIERVAIKNDALKKELETVVTDFKKIKEINIQLKKTTKIAEAFAKYKQKLDTGIAAEKILNTEKDLELIELAQMDLDEAKINIPIIENDLKIMLLPTDPNDDKNVIVEMRPAAGGDESSIFVGNLFDTYRAYAENNNWKMKIIEMTPNAVGFSFISFMISGEEVYSRMKFESGVHRVQRVPATESKGRVHTSTITVAVLPEQDEVDVVINPTELRIDTYRASGAGGQHVNRTESAVRITHIPTGVVAACQEGKSQIENRETAMKMLRAKLWEAAQEQQNAEFANLRKNQVGTGDRSEKIRTYNYPQNRVTDHRINLTLNKLDQIMMGELDEIIDALIADEQTGLMANLDI</sequence>
<protein>
    <recommendedName>
        <fullName>Peptide chain release factor 1</fullName>
        <shortName>RF-1</shortName>
    </recommendedName>
</protein>
<dbReference type="EMBL" id="AF222894">
    <property type="protein sequence ID" value="AAF30410.1"/>
    <property type="molecule type" value="Genomic_DNA"/>
</dbReference>
<dbReference type="RefSeq" id="WP_006688457.1">
    <property type="nucleotide sequence ID" value="NC_002162.1"/>
</dbReference>
<dbReference type="SMR" id="Q9PRE0"/>
<dbReference type="STRING" id="273119.UU003"/>
<dbReference type="EnsemblBacteria" id="AAF30410">
    <property type="protein sequence ID" value="AAF30410"/>
    <property type="gene ID" value="UU003"/>
</dbReference>
<dbReference type="GeneID" id="29672265"/>
<dbReference type="KEGG" id="uur:UU003"/>
<dbReference type="eggNOG" id="COG0216">
    <property type="taxonomic scope" value="Bacteria"/>
</dbReference>
<dbReference type="HOGENOM" id="CLU_036856_0_1_14"/>
<dbReference type="OrthoDB" id="9806673at2"/>
<dbReference type="Proteomes" id="UP000000423">
    <property type="component" value="Chromosome"/>
</dbReference>
<dbReference type="GO" id="GO:0005737">
    <property type="term" value="C:cytoplasm"/>
    <property type="evidence" value="ECO:0007669"/>
    <property type="project" value="UniProtKB-SubCell"/>
</dbReference>
<dbReference type="GO" id="GO:0016149">
    <property type="term" value="F:translation release factor activity, codon specific"/>
    <property type="evidence" value="ECO:0007669"/>
    <property type="project" value="UniProtKB-UniRule"/>
</dbReference>
<dbReference type="FunFam" id="3.30.160.20:FF:000004">
    <property type="entry name" value="Peptide chain release factor 1"/>
    <property type="match status" value="1"/>
</dbReference>
<dbReference type="FunFam" id="3.30.70.1660:FF:000002">
    <property type="entry name" value="Peptide chain release factor 1"/>
    <property type="match status" value="1"/>
</dbReference>
<dbReference type="FunFam" id="3.30.70.1660:FF:000004">
    <property type="entry name" value="Peptide chain release factor 1"/>
    <property type="match status" value="1"/>
</dbReference>
<dbReference type="Gene3D" id="3.30.160.20">
    <property type="match status" value="1"/>
</dbReference>
<dbReference type="Gene3D" id="3.30.70.1660">
    <property type="match status" value="1"/>
</dbReference>
<dbReference type="Gene3D" id="6.10.140.1950">
    <property type="match status" value="1"/>
</dbReference>
<dbReference type="HAMAP" id="MF_00093">
    <property type="entry name" value="Rel_fac_1"/>
    <property type="match status" value="1"/>
</dbReference>
<dbReference type="InterPro" id="IPR005139">
    <property type="entry name" value="PCRF"/>
</dbReference>
<dbReference type="InterPro" id="IPR000352">
    <property type="entry name" value="Pep_chain_release_fac_I"/>
</dbReference>
<dbReference type="InterPro" id="IPR045853">
    <property type="entry name" value="Pep_chain_release_fac_I_sf"/>
</dbReference>
<dbReference type="InterPro" id="IPR050057">
    <property type="entry name" value="Prokaryotic/Mito_RF"/>
</dbReference>
<dbReference type="InterPro" id="IPR004373">
    <property type="entry name" value="RF-1"/>
</dbReference>
<dbReference type="NCBIfam" id="TIGR00019">
    <property type="entry name" value="prfA"/>
    <property type="match status" value="1"/>
</dbReference>
<dbReference type="NCBIfam" id="NF001859">
    <property type="entry name" value="PRK00591.1"/>
    <property type="match status" value="1"/>
</dbReference>
<dbReference type="PANTHER" id="PTHR43804">
    <property type="entry name" value="LD18447P"/>
    <property type="match status" value="1"/>
</dbReference>
<dbReference type="PANTHER" id="PTHR43804:SF7">
    <property type="entry name" value="LD18447P"/>
    <property type="match status" value="1"/>
</dbReference>
<dbReference type="Pfam" id="PF03462">
    <property type="entry name" value="PCRF"/>
    <property type="match status" value="1"/>
</dbReference>
<dbReference type="Pfam" id="PF00472">
    <property type="entry name" value="RF-1"/>
    <property type="match status" value="1"/>
</dbReference>
<dbReference type="SMART" id="SM00937">
    <property type="entry name" value="PCRF"/>
    <property type="match status" value="1"/>
</dbReference>
<dbReference type="SUPFAM" id="SSF75620">
    <property type="entry name" value="Release factor"/>
    <property type="match status" value="1"/>
</dbReference>
<dbReference type="PROSITE" id="PS00745">
    <property type="entry name" value="RF_PROK_I"/>
    <property type="match status" value="1"/>
</dbReference>
<feature type="chain" id="PRO_0000177765" description="Peptide chain release factor 1">
    <location>
        <begin position="1"/>
        <end position="359"/>
    </location>
</feature>
<feature type="modified residue" description="N5-methylglutamine" evidence="1">
    <location>
        <position position="236"/>
    </location>
</feature>
<organism>
    <name type="scientific">Ureaplasma parvum serovar 3 (strain ATCC 700970)</name>
    <dbReference type="NCBI Taxonomy" id="273119"/>
    <lineage>
        <taxon>Bacteria</taxon>
        <taxon>Bacillati</taxon>
        <taxon>Mycoplasmatota</taxon>
        <taxon>Mycoplasmoidales</taxon>
        <taxon>Mycoplasmoidaceae</taxon>
        <taxon>Ureaplasma</taxon>
    </lineage>
</organism>
<keyword id="KW-0963">Cytoplasm</keyword>
<keyword id="KW-0488">Methylation</keyword>
<keyword id="KW-0648">Protein biosynthesis</keyword>
<keyword id="KW-1185">Reference proteome</keyword>
<gene>
    <name type="primary">prfA</name>
    <name type="ordered locus">UU003</name>
</gene>
<reference key="1">
    <citation type="journal article" date="2000" name="Nature">
        <title>The complete sequence of the mucosal pathogen Ureaplasma urealyticum.</title>
        <authorList>
            <person name="Glass J.I."/>
            <person name="Lefkowitz E.J."/>
            <person name="Glass J.S."/>
            <person name="Heiner C.R."/>
            <person name="Chen E.Y."/>
            <person name="Cassell G.H."/>
        </authorList>
    </citation>
    <scope>NUCLEOTIDE SEQUENCE [LARGE SCALE GENOMIC DNA]</scope>
    <source>
        <strain>ATCC 700970</strain>
    </source>
</reference>
<comment type="function">
    <text evidence="1">Peptide chain release factor 1 directs the termination of translation in response to the peptide chain termination codons UAG and UAA.</text>
</comment>
<comment type="subcellular location">
    <subcellularLocation>
        <location evidence="1">Cytoplasm</location>
    </subcellularLocation>
</comment>
<comment type="PTM">
    <text evidence="1">Methylated by PrmC. Methylation increases the termination efficiency of RF1 (By similarity).</text>
</comment>
<comment type="similarity">
    <text evidence="2">Belongs to the prokaryotic/mitochondrial release factor family.</text>
</comment>
<accession>Q9PRE0</accession>
<name>RF1_UREPA</name>
<evidence type="ECO:0000250" key="1"/>
<evidence type="ECO:0000305" key="2"/>
<proteinExistence type="inferred from homology"/>